<keyword id="KW-0007">Acetylation</keyword>
<keyword id="KW-0963">Cytoplasm</keyword>
<keyword id="KW-0378">Hydrolase</keyword>
<keyword id="KW-0479">Metal-binding</keyword>
<keyword id="KW-0597">Phosphoprotein</keyword>
<keyword id="KW-1185">Reference proteome</keyword>
<keyword id="KW-0862">Zinc</keyword>
<gene>
    <name type="primary">NGLY1</name>
    <name type="ORF">QtsA-18143</name>
</gene>
<protein>
    <recommendedName>
        <fullName>Peptide-N(4)-(N-acetyl-beta-glucosaminyl)asparagine amidase</fullName>
        <shortName>PNGase</shortName>
        <ecNumber>3.5.1.52</ecNumber>
    </recommendedName>
    <alternativeName>
        <fullName>N-glycanase 1</fullName>
    </alternativeName>
    <alternativeName>
        <fullName>Peptide:N-glycanase</fullName>
    </alternativeName>
</protein>
<evidence type="ECO:0000250" key="1"/>
<evidence type="ECO:0000250" key="2">
    <source>
        <dbReference type="UniProtKB" id="Q96IV0"/>
    </source>
</evidence>
<evidence type="ECO:0000255" key="3">
    <source>
        <dbReference type="PROSITE-ProRule" id="PRU00731"/>
    </source>
</evidence>
<evidence type="ECO:0000256" key="4">
    <source>
        <dbReference type="SAM" id="MobiDB-lite"/>
    </source>
</evidence>
<organism>
    <name type="scientific">Macaca fascicularis</name>
    <name type="common">Crab-eating macaque</name>
    <name type="synonym">Cynomolgus monkey</name>
    <dbReference type="NCBI Taxonomy" id="9541"/>
    <lineage>
        <taxon>Eukaryota</taxon>
        <taxon>Metazoa</taxon>
        <taxon>Chordata</taxon>
        <taxon>Craniata</taxon>
        <taxon>Vertebrata</taxon>
        <taxon>Euteleostomi</taxon>
        <taxon>Mammalia</taxon>
        <taxon>Eutheria</taxon>
        <taxon>Euarchontoglires</taxon>
        <taxon>Primates</taxon>
        <taxon>Haplorrhini</taxon>
        <taxon>Catarrhini</taxon>
        <taxon>Cercopithecidae</taxon>
        <taxon>Cercopithecinae</taxon>
        <taxon>Macaca</taxon>
    </lineage>
</organism>
<name>NGLY1_MACFA</name>
<reference key="1">
    <citation type="submission" date="2005-06" db="EMBL/GenBank/DDBJ databases">
        <title>DNA sequences of macaque genes expressed in brain or testis and its evolutionary implications.</title>
        <authorList>
            <consortium name="International consortium for macaque cDNA sequencing and analysis"/>
        </authorList>
    </citation>
    <scope>NUCLEOTIDE SEQUENCE [LARGE SCALE MRNA]</scope>
    <source>
        <tissue>Testis</tissue>
    </source>
</reference>
<proteinExistence type="evidence at transcript level"/>
<accession>Q4R6F3</accession>
<sequence>MAAAALGSSSGSASPAVAELCQNTPETFLEASKLLLTYADNILRNPNDEKYRSIRIGNTAFSTRLLPVRGAVECLFEMGFEEGETHLIFPKKASVEQLQKIRDLIAIERSSRLDGSNKSHKVESSQQPAASTQLPTTPSSNPSGLNQHTRNRQGQSPDPPSASTVTPDSAILGVLQSNIQHVLVYENPALQEKALACIPVQELKRKSQEKLSRVRKLDKGTNISDEDFLLLELLHWFKEEFFHWVNNILCSKCGGQTRSRDRSLLPNDDELKWGAKKVEDHYCDACQFSNRFPRYNNPEKLLETRCGRCGEWANCFTLCCRALGFEARYVWDYTDHVWTEVYSPSQQRWLHCDACEDVCDKPLLYEIGWGKKLSYVIAFSKDEVVDVTWRYSCKHEEVIARRTKVKEALLRETINGLNKQRQLFLSENRRKELLQRIIVELVEFISPKTPKPGELGGRISGSVAWRVARGEMGLQRKETSFIPSENEKISKQLHLCYNIVKDRYVRVSNNNQTISGWENGVWKMESIFRKVETDWHMVYLARKEGSSFAYISWKFECGSVGLKIDSISIRTTSQTFQTGTIEWKLRSDTARVELTGDNNLHSYADFSGATEVILEAELSRGDGDVAWQHTQLFRQSLNDHEENCLEIIIKFSDL</sequence>
<dbReference type="EC" id="3.5.1.52"/>
<dbReference type="EMBL" id="AB169230">
    <property type="protein sequence ID" value="BAE01322.1"/>
    <property type="molecule type" value="mRNA"/>
</dbReference>
<dbReference type="RefSeq" id="NP_001270097.1">
    <property type="nucleotide sequence ID" value="NM_001283168.1"/>
</dbReference>
<dbReference type="RefSeq" id="XP_045242985.1">
    <property type="nucleotide sequence ID" value="XM_045387050.2"/>
</dbReference>
<dbReference type="SMR" id="Q4R6F3"/>
<dbReference type="STRING" id="9541.ENSMFAP00000040190"/>
<dbReference type="GeneID" id="101925902"/>
<dbReference type="eggNOG" id="KOG0909">
    <property type="taxonomic scope" value="Eukaryota"/>
</dbReference>
<dbReference type="Proteomes" id="UP000233100">
    <property type="component" value="Unplaced"/>
</dbReference>
<dbReference type="GO" id="GO:0005737">
    <property type="term" value="C:cytoplasm"/>
    <property type="evidence" value="ECO:0000250"/>
    <property type="project" value="UniProtKB"/>
</dbReference>
<dbReference type="GO" id="GO:0005829">
    <property type="term" value="C:cytosol"/>
    <property type="evidence" value="ECO:0007669"/>
    <property type="project" value="TreeGrafter"/>
</dbReference>
<dbReference type="GO" id="GO:0005634">
    <property type="term" value="C:nucleus"/>
    <property type="evidence" value="ECO:0007669"/>
    <property type="project" value="TreeGrafter"/>
</dbReference>
<dbReference type="GO" id="GO:0046872">
    <property type="term" value="F:metal ion binding"/>
    <property type="evidence" value="ECO:0007669"/>
    <property type="project" value="UniProtKB-KW"/>
</dbReference>
<dbReference type="GO" id="GO:0000224">
    <property type="term" value="F:peptide-N4-(N-acetyl-beta-glucosaminyl)asparagine amidase activity"/>
    <property type="evidence" value="ECO:0007669"/>
    <property type="project" value="UniProtKB-EC"/>
</dbReference>
<dbReference type="GO" id="GO:0006516">
    <property type="term" value="P:glycoprotein catabolic process"/>
    <property type="evidence" value="ECO:0000250"/>
    <property type="project" value="UniProtKB"/>
</dbReference>
<dbReference type="CDD" id="cd10459">
    <property type="entry name" value="PUB_PNGase"/>
    <property type="match status" value="1"/>
</dbReference>
<dbReference type="FunFam" id="1.20.58.2190:FF:000006">
    <property type="entry name" value="N-glycanase 1"/>
    <property type="match status" value="1"/>
</dbReference>
<dbReference type="FunFam" id="2.20.25.10:FF:000011">
    <property type="entry name" value="peptide-N(4)-(N-acetyl-beta- glucosaminyl)asparagine amidase"/>
    <property type="match status" value="1"/>
</dbReference>
<dbReference type="FunFam" id="3.10.620.30:FF:000001">
    <property type="entry name" value="peptide-N(4)-(N-acetyl-beta- glucosaminyl)asparagine amidase"/>
    <property type="match status" value="1"/>
</dbReference>
<dbReference type="FunFam" id="2.60.120.1020:FF:000001">
    <property type="entry name" value="Peptide-N(4)-(N-acetyl-beta-glucosaminyl)asparagine amidase"/>
    <property type="match status" value="1"/>
</dbReference>
<dbReference type="Gene3D" id="1.20.58.2190">
    <property type="match status" value="1"/>
</dbReference>
<dbReference type="Gene3D" id="2.20.25.10">
    <property type="match status" value="1"/>
</dbReference>
<dbReference type="Gene3D" id="3.10.620.30">
    <property type="match status" value="1"/>
</dbReference>
<dbReference type="Gene3D" id="2.60.120.1020">
    <property type="entry name" value="Peptide N glycanase, PAW domain"/>
    <property type="match status" value="1"/>
</dbReference>
<dbReference type="InterPro" id="IPR008979">
    <property type="entry name" value="Galactose-bd-like_sf"/>
</dbReference>
<dbReference type="InterPro" id="IPR038765">
    <property type="entry name" value="Papain-like_cys_pep_sf"/>
</dbReference>
<dbReference type="InterPro" id="IPR038680">
    <property type="entry name" value="PAW_sf"/>
</dbReference>
<dbReference type="InterPro" id="IPR006588">
    <property type="entry name" value="Peptide_N_glycanase_PAW_dom"/>
</dbReference>
<dbReference type="InterPro" id="IPR050883">
    <property type="entry name" value="PNGase"/>
</dbReference>
<dbReference type="InterPro" id="IPR036339">
    <property type="entry name" value="PUB-like_dom_sf"/>
</dbReference>
<dbReference type="InterPro" id="IPR018997">
    <property type="entry name" value="PUB_domain"/>
</dbReference>
<dbReference type="InterPro" id="IPR002931">
    <property type="entry name" value="Transglutaminase-like"/>
</dbReference>
<dbReference type="PANTHER" id="PTHR12143">
    <property type="entry name" value="PEPTIDE N-GLYCANASE PNGASE -RELATED"/>
    <property type="match status" value="1"/>
</dbReference>
<dbReference type="PANTHER" id="PTHR12143:SF19">
    <property type="entry name" value="PEPTIDE-N(4)-(N-ACETYL-BETA-GLUCOSAMINYL)ASPARAGINE AMIDASE"/>
    <property type="match status" value="1"/>
</dbReference>
<dbReference type="Pfam" id="PF04721">
    <property type="entry name" value="PAW"/>
    <property type="match status" value="1"/>
</dbReference>
<dbReference type="Pfam" id="PF09409">
    <property type="entry name" value="PUB"/>
    <property type="match status" value="1"/>
</dbReference>
<dbReference type="Pfam" id="PF01841">
    <property type="entry name" value="Transglut_core"/>
    <property type="match status" value="1"/>
</dbReference>
<dbReference type="SMART" id="SM00613">
    <property type="entry name" value="PAW"/>
    <property type="match status" value="1"/>
</dbReference>
<dbReference type="SMART" id="SM00580">
    <property type="entry name" value="PUG"/>
    <property type="match status" value="1"/>
</dbReference>
<dbReference type="SMART" id="SM00460">
    <property type="entry name" value="TGc"/>
    <property type="match status" value="1"/>
</dbReference>
<dbReference type="SUPFAM" id="SSF54001">
    <property type="entry name" value="Cysteine proteinases"/>
    <property type="match status" value="1"/>
</dbReference>
<dbReference type="SUPFAM" id="SSF49785">
    <property type="entry name" value="Galactose-binding domain-like"/>
    <property type="match status" value="1"/>
</dbReference>
<dbReference type="SUPFAM" id="SSF143503">
    <property type="entry name" value="PUG domain-like"/>
    <property type="match status" value="1"/>
</dbReference>
<dbReference type="PROSITE" id="PS51398">
    <property type="entry name" value="PAW"/>
    <property type="match status" value="1"/>
</dbReference>
<feature type="initiator methionine" description="Removed" evidence="2">
    <location>
        <position position="1"/>
    </location>
</feature>
<feature type="chain" id="PRO_0000248972" description="Peptide-N(4)-(N-acetyl-beta-glucosaminyl)asparagine amidase">
    <location>
        <begin position="2"/>
        <end position="654"/>
    </location>
</feature>
<feature type="domain" description="PUB">
    <location>
        <begin position="30"/>
        <end position="91"/>
    </location>
</feature>
<feature type="domain" description="PAW" evidence="3">
    <location>
        <begin position="454"/>
        <end position="654"/>
    </location>
</feature>
<feature type="region of interest" description="Disordered" evidence="4">
    <location>
        <begin position="112"/>
        <end position="167"/>
    </location>
</feature>
<feature type="compositionally biased region" description="Basic and acidic residues" evidence="4">
    <location>
        <begin position="112"/>
        <end position="123"/>
    </location>
</feature>
<feature type="compositionally biased region" description="Polar residues" evidence="4">
    <location>
        <begin position="124"/>
        <end position="167"/>
    </location>
</feature>
<feature type="active site" description="Nucleophile" evidence="1">
    <location>
        <position position="309"/>
    </location>
</feature>
<feature type="active site" evidence="1">
    <location>
        <position position="336"/>
    </location>
</feature>
<feature type="active site" evidence="1">
    <location>
        <position position="353"/>
    </location>
</feature>
<feature type="binding site" evidence="1">
    <location>
        <position position="250"/>
    </location>
    <ligand>
        <name>Zn(2+)</name>
        <dbReference type="ChEBI" id="CHEBI:29105"/>
    </ligand>
</feature>
<feature type="binding site" evidence="1">
    <location>
        <position position="253"/>
    </location>
    <ligand>
        <name>Zn(2+)</name>
        <dbReference type="ChEBI" id="CHEBI:29105"/>
    </ligand>
</feature>
<feature type="binding site" evidence="1">
    <location>
        <position position="283"/>
    </location>
    <ligand>
        <name>Zn(2+)</name>
        <dbReference type="ChEBI" id="CHEBI:29105"/>
    </ligand>
</feature>
<feature type="binding site" evidence="1">
    <location>
        <position position="286"/>
    </location>
    <ligand>
        <name>Zn(2+)</name>
        <dbReference type="ChEBI" id="CHEBI:29105"/>
    </ligand>
</feature>
<feature type="modified residue" description="N-acetylalanine" evidence="2">
    <location>
        <position position="2"/>
    </location>
</feature>
<feature type="modified residue" description="Phosphothreonine" evidence="2">
    <location>
        <position position="137"/>
    </location>
</feature>
<comment type="function">
    <text evidence="1">Specifically deglycosylates the denatured form of N-linked glycoproteins in the cytoplasm and assists their proteasome-mediated degradation. Cleaves the beta-aspartyl-glucosamine (GlcNAc) of the glycan and the amide side chain of Asn, converting Asn to Asp. Prefers proteins containing high-mannose over those bearing complex type oligosaccharides. Can recognize misfolded proteins in the endoplasmic reticulum that are exported to the cytosol to be destroyed and deglycosylate them, while it has no activity toward native proteins. Deglycosylation is a prerequisite for subsequent proteasome-mediated degradation of some, but not all, misfolded glycoproteins (By similarity).</text>
</comment>
<comment type="catalytic activity">
    <reaction>
        <text>Hydrolysis of an N(4)-(acetyl-beta-D-glucosaminyl)asparagine residue in which the glucosamine residue may be further glycosylated, to yield a (substituted) N-acetyl-beta-D-glucosaminylamine and a peptide containing an aspartate residue.</text>
        <dbReference type="EC" id="3.5.1.52"/>
    </reaction>
</comment>
<comment type="cofactor">
    <cofactor evidence="1">
        <name>Zn(2+)</name>
        <dbReference type="ChEBI" id="CHEBI:29105"/>
    </cofactor>
    <text evidence="1">Binds 1 zinc ion per subunit.</text>
</comment>
<comment type="activity regulation">
    <text evidence="1">Inhibited by Z-VAD-fmk, a well-known caspase inhibitor, which inhibits enzyme activity through covalent binding of the carbohydrate to the single Cys-306 residue.</text>
</comment>
<comment type="subunit">
    <text evidence="1">Component of a complex required to couple retrotranslocation, ubiquitination and deglycosylation composed of NGLY1, SAKS1, AMFR, VCP and RAD23B. Interacts with the proteasome components RAD23B and PSMC1. Interacts with directly with VCP. Interacts with DERL1, bringing it close to the endoplasmic reticulum membrane. Interacts with SAKS1 (By similarity).</text>
</comment>
<comment type="subcellular location">
    <subcellularLocation>
        <location evidence="1">Cytoplasm</location>
    </subcellularLocation>
</comment>
<comment type="domain">
    <text evidence="1">The PUB domain mediates the interaction with VCP.</text>
</comment>
<comment type="similarity">
    <text evidence="3">Belongs to the transglutaminase-like superfamily. PNGase family.</text>
</comment>